<protein>
    <recommendedName>
        <fullName>Chaperone protein AfaB</fullName>
    </recommendedName>
</protein>
<accession>P53516</accession>
<feature type="signal peptide" evidence="1">
    <location>
        <begin position="1"/>
        <end position="29"/>
    </location>
</feature>
<feature type="chain" id="PRO_0000009262" description="Chaperone protein AfaB">
    <location>
        <begin position="30"/>
        <end position="247"/>
    </location>
</feature>
<name>AFAB_ECOLX</name>
<evidence type="ECO:0000255" key="1"/>
<evidence type="ECO:0000305" key="2"/>
<keyword id="KW-0143">Chaperone</keyword>
<keyword id="KW-0393">Immunoglobulin domain</keyword>
<keyword id="KW-0574">Periplasm</keyword>
<keyword id="KW-0614">Plasmid</keyword>
<keyword id="KW-0732">Signal</keyword>
<comment type="function">
    <text>Involved in the biogenesis of the AFA-III afimbrial adhesin.</text>
</comment>
<comment type="subcellular location">
    <subcellularLocation>
        <location evidence="2">Periplasm</location>
    </subcellularLocation>
</comment>
<comment type="similarity">
    <text evidence="2">Belongs to the periplasmic pilus chaperone family.</text>
</comment>
<comment type="caution">
    <text evidence="2">It is uncertain whether Met-1 or Met-3 is the initiator.</text>
</comment>
<comment type="sequence caution" evidence="2">
    <conflict type="erroneous initiation">
        <sequence resource="EMBL-CDS" id="CAA54116"/>
    </conflict>
</comment>
<sequence length="247" mass="26763">MKMRAVAVFTGMLTGVLSVAGLLSAGAYAAGGEGNMSASATETNARVFSLHLGATRVVYNPASSGETLTVINDQDYPMLVQSEVLSEDQKSPAPFVVTPPLFRLDGQQSSRLRIVRTGGEFPPDRESLQWICVKGIPPKEGDRWAEGKDGEKKADKVSLNVQLSVSSCIKLFVRPPAVKGRPDDVAGKVEWQRAGNRLKGVNPTPFYINLSTLTVGGKEVKEREYIAPFSSREYPLPAGHRVRFSGR</sequence>
<reference key="1">
    <citation type="journal article" date="1994" name="J. Bacteriol.">
        <title>Nucleotide sequence of the afimbrial-adhesin-encoding afa-3 gene cluster and its translocation via flanking IS1 insertion sequences.</title>
        <authorList>
            <person name="Garcia M.-I."/>
            <person name="Labigne A."/>
            <person name="le Bouguenec C.L."/>
        </authorList>
    </citation>
    <scope>NUCLEOTIDE SEQUENCE [GENOMIC DNA]</scope>
    <source>
        <strain>A30 / UPEC</strain>
    </source>
</reference>
<proteinExistence type="inferred from homology"/>
<geneLocation type="plasmid">
    <name>pIL1055</name>
</geneLocation>
<organism>
    <name type="scientific">Escherichia coli</name>
    <dbReference type="NCBI Taxonomy" id="562"/>
    <lineage>
        <taxon>Bacteria</taxon>
        <taxon>Pseudomonadati</taxon>
        <taxon>Pseudomonadota</taxon>
        <taxon>Gammaproteobacteria</taxon>
        <taxon>Enterobacterales</taxon>
        <taxon>Enterobacteriaceae</taxon>
        <taxon>Escherichia</taxon>
    </lineage>
</organism>
<gene>
    <name type="primary">afaB</name>
</gene>
<dbReference type="EMBL" id="X76688">
    <property type="protein sequence ID" value="CAA54115.1"/>
    <property type="molecule type" value="Genomic_DNA"/>
</dbReference>
<dbReference type="EMBL" id="X76688">
    <property type="protein sequence ID" value="CAA54116.1"/>
    <property type="status" value="ALT_INIT"/>
    <property type="molecule type" value="Genomic_DNA"/>
</dbReference>
<dbReference type="PIR" id="E55545">
    <property type="entry name" value="E55545"/>
</dbReference>
<dbReference type="SMR" id="P53516"/>
<dbReference type="GO" id="GO:0030288">
    <property type="term" value="C:outer membrane-bounded periplasmic space"/>
    <property type="evidence" value="ECO:0007669"/>
    <property type="project" value="InterPro"/>
</dbReference>
<dbReference type="GO" id="GO:0071555">
    <property type="term" value="P:cell wall organization"/>
    <property type="evidence" value="ECO:0007669"/>
    <property type="project" value="InterPro"/>
</dbReference>
<dbReference type="GO" id="GO:0061077">
    <property type="term" value="P:chaperone-mediated protein folding"/>
    <property type="evidence" value="ECO:0007669"/>
    <property type="project" value="InterPro"/>
</dbReference>
<dbReference type="Gene3D" id="2.60.40.10">
    <property type="entry name" value="Immunoglobulins"/>
    <property type="match status" value="2"/>
</dbReference>
<dbReference type="InterPro" id="IPR013783">
    <property type="entry name" value="Ig-like_fold"/>
</dbReference>
<dbReference type="InterPro" id="IPR008962">
    <property type="entry name" value="PapD-like_sf"/>
</dbReference>
<dbReference type="InterPro" id="IPR050643">
    <property type="entry name" value="Periplasmic_pilus_chap"/>
</dbReference>
<dbReference type="InterPro" id="IPR036316">
    <property type="entry name" value="Pili_assmbl_chap_C_dom_sf"/>
</dbReference>
<dbReference type="InterPro" id="IPR001829">
    <property type="entry name" value="Pili_assmbl_chaperone_bac"/>
</dbReference>
<dbReference type="InterPro" id="IPR016148">
    <property type="entry name" value="Pili_assmbl_chaperone_C"/>
</dbReference>
<dbReference type="InterPro" id="IPR018046">
    <property type="entry name" value="Pili_assmbl_chaperone_CS"/>
</dbReference>
<dbReference type="InterPro" id="IPR016147">
    <property type="entry name" value="Pili_assmbl_chaperone_N"/>
</dbReference>
<dbReference type="PANTHER" id="PTHR30251:SF9">
    <property type="entry name" value="CHAPERONE PROTEIN CAF1M"/>
    <property type="match status" value="1"/>
</dbReference>
<dbReference type="PANTHER" id="PTHR30251">
    <property type="entry name" value="PILUS ASSEMBLY CHAPERONE"/>
    <property type="match status" value="1"/>
</dbReference>
<dbReference type="Pfam" id="PF02753">
    <property type="entry name" value="PapD_C"/>
    <property type="match status" value="1"/>
</dbReference>
<dbReference type="Pfam" id="PF00345">
    <property type="entry name" value="PapD_N"/>
    <property type="match status" value="1"/>
</dbReference>
<dbReference type="PRINTS" id="PR00969">
    <property type="entry name" value="CHAPERONPILI"/>
</dbReference>
<dbReference type="SUPFAM" id="SSF49354">
    <property type="entry name" value="PapD-like"/>
    <property type="match status" value="1"/>
</dbReference>
<dbReference type="SUPFAM" id="SSF49584">
    <property type="entry name" value="Periplasmic chaperone C-domain"/>
    <property type="match status" value="1"/>
</dbReference>
<dbReference type="PROSITE" id="PS00635">
    <property type="entry name" value="PILI_CHAPERONE"/>
    <property type="match status" value="1"/>
</dbReference>